<protein>
    <recommendedName>
        <fullName evidence="1">Sulfate adenylyltransferase subunit 2</fullName>
        <ecNumber evidence="1">2.7.7.4</ecNumber>
    </recommendedName>
    <alternativeName>
        <fullName evidence="1">ATP-sulfurylase small subunit</fullName>
    </alternativeName>
    <alternativeName>
        <fullName evidence="1">Sulfate adenylate transferase</fullName>
        <shortName evidence="1">SAT</shortName>
    </alternativeName>
</protein>
<organism>
    <name type="scientific">Methylococcus capsulatus (strain ATCC 33009 / NCIMB 11132 / Bath)</name>
    <dbReference type="NCBI Taxonomy" id="243233"/>
    <lineage>
        <taxon>Bacteria</taxon>
        <taxon>Pseudomonadati</taxon>
        <taxon>Pseudomonadota</taxon>
        <taxon>Gammaproteobacteria</taxon>
        <taxon>Methylococcales</taxon>
        <taxon>Methylococcaceae</taxon>
        <taxon>Methylococcus</taxon>
    </lineage>
</organism>
<accession>Q604B7</accession>
<gene>
    <name evidence="1" type="primary">cysD</name>
    <name type="ordered locus">MCA2629</name>
</gene>
<evidence type="ECO:0000255" key="1">
    <source>
        <dbReference type="HAMAP-Rule" id="MF_00064"/>
    </source>
</evidence>
<proteinExistence type="inferred from homology"/>
<sequence length="302" mass="35358">MNAHKLTHLKQLESESIHIFREVVSEFERPVMLYSIGKDSAVMLHLAMKAFYPGKPPFPLMHVDTTWKFRDMIAFRDRRAQELGLDLIIHVNEEGVRQGINPFVHGSKKHTDIMKTEGLKQALDKYRFDAAFGGARRDEEKSRAKERVYSFRDRHHRWDPKNQRPELWNLYNGKINKGESIRVFPLSNWTELDVWQYIYLEDIPIVPLYFAAERPVVERDGMLIMVDDERMPLLPGEVPMRKKVRFRTLGCYPLTGAIESDAATLPEIIQEMLLTRTSERQGRLIDHDQAGSMEEKKKEGYF</sequence>
<dbReference type="EC" id="2.7.7.4" evidence="1"/>
<dbReference type="EMBL" id="AE017282">
    <property type="protein sequence ID" value="AAU91270.1"/>
    <property type="molecule type" value="Genomic_DNA"/>
</dbReference>
<dbReference type="RefSeq" id="WP_010961842.1">
    <property type="nucleotide sequence ID" value="NC_002977.6"/>
</dbReference>
<dbReference type="SMR" id="Q604B7"/>
<dbReference type="STRING" id="243233.MCA2629"/>
<dbReference type="GeneID" id="88224812"/>
<dbReference type="KEGG" id="mca:MCA2629"/>
<dbReference type="eggNOG" id="COG0175">
    <property type="taxonomic scope" value="Bacteria"/>
</dbReference>
<dbReference type="HOGENOM" id="CLU_043026_0_0_6"/>
<dbReference type="UniPathway" id="UPA00140">
    <property type="reaction ID" value="UER00204"/>
</dbReference>
<dbReference type="Proteomes" id="UP000006821">
    <property type="component" value="Chromosome"/>
</dbReference>
<dbReference type="GO" id="GO:0005524">
    <property type="term" value="F:ATP binding"/>
    <property type="evidence" value="ECO:0007669"/>
    <property type="project" value="UniProtKB-KW"/>
</dbReference>
<dbReference type="GO" id="GO:0004781">
    <property type="term" value="F:sulfate adenylyltransferase (ATP) activity"/>
    <property type="evidence" value="ECO:0007669"/>
    <property type="project" value="UniProtKB-UniRule"/>
</dbReference>
<dbReference type="GO" id="GO:0070814">
    <property type="term" value="P:hydrogen sulfide biosynthetic process"/>
    <property type="evidence" value="ECO:0007669"/>
    <property type="project" value="UniProtKB-UniRule"/>
</dbReference>
<dbReference type="GO" id="GO:0000103">
    <property type="term" value="P:sulfate assimilation"/>
    <property type="evidence" value="ECO:0007669"/>
    <property type="project" value="UniProtKB-UniRule"/>
</dbReference>
<dbReference type="CDD" id="cd23946">
    <property type="entry name" value="Sulfate_adenylyltransferase_2"/>
    <property type="match status" value="1"/>
</dbReference>
<dbReference type="FunFam" id="3.40.50.620:FF:000002">
    <property type="entry name" value="Sulfate adenylyltransferase subunit 2"/>
    <property type="match status" value="1"/>
</dbReference>
<dbReference type="Gene3D" id="3.40.50.620">
    <property type="entry name" value="HUPs"/>
    <property type="match status" value="1"/>
</dbReference>
<dbReference type="HAMAP" id="MF_00064">
    <property type="entry name" value="Sulf_adenylyltr_sub2"/>
    <property type="match status" value="1"/>
</dbReference>
<dbReference type="InterPro" id="IPR002500">
    <property type="entry name" value="PAPS_reduct_dom"/>
</dbReference>
<dbReference type="InterPro" id="IPR014729">
    <property type="entry name" value="Rossmann-like_a/b/a_fold"/>
</dbReference>
<dbReference type="InterPro" id="IPR011784">
    <property type="entry name" value="SO4_adenylTrfase_ssu"/>
</dbReference>
<dbReference type="InterPro" id="IPR050128">
    <property type="entry name" value="Sulfate_adenylyltrnsfr_sub2"/>
</dbReference>
<dbReference type="NCBIfam" id="TIGR02039">
    <property type="entry name" value="CysD"/>
    <property type="match status" value="1"/>
</dbReference>
<dbReference type="NCBIfam" id="NF003587">
    <property type="entry name" value="PRK05253.1"/>
    <property type="match status" value="1"/>
</dbReference>
<dbReference type="NCBIfam" id="NF009214">
    <property type="entry name" value="PRK12563.1"/>
    <property type="match status" value="1"/>
</dbReference>
<dbReference type="PANTHER" id="PTHR43196">
    <property type="entry name" value="SULFATE ADENYLYLTRANSFERASE SUBUNIT 2"/>
    <property type="match status" value="1"/>
</dbReference>
<dbReference type="PANTHER" id="PTHR43196:SF1">
    <property type="entry name" value="SULFATE ADENYLYLTRANSFERASE SUBUNIT 2"/>
    <property type="match status" value="1"/>
</dbReference>
<dbReference type="Pfam" id="PF01507">
    <property type="entry name" value="PAPS_reduct"/>
    <property type="match status" value="1"/>
</dbReference>
<dbReference type="PIRSF" id="PIRSF002936">
    <property type="entry name" value="CysDAde_trans"/>
    <property type="match status" value="1"/>
</dbReference>
<dbReference type="SUPFAM" id="SSF52402">
    <property type="entry name" value="Adenine nucleotide alpha hydrolases-like"/>
    <property type="match status" value="1"/>
</dbReference>
<keyword id="KW-0067">ATP-binding</keyword>
<keyword id="KW-0547">Nucleotide-binding</keyword>
<keyword id="KW-0548">Nucleotidyltransferase</keyword>
<keyword id="KW-1185">Reference proteome</keyword>
<keyword id="KW-0808">Transferase</keyword>
<reference key="1">
    <citation type="journal article" date="2004" name="PLoS Biol.">
        <title>Genomic insights into methanotrophy: the complete genome sequence of Methylococcus capsulatus (Bath).</title>
        <authorList>
            <person name="Ward N.L."/>
            <person name="Larsen O."/>
            <person name="Sakwa J."/>
            <person name="Bruseth L."/>
            <person name="Khouri H.M."/>
            <person name="Durkin A.S."/>
            <person name="Dimitrov G."/>
            <person name="Jiang L."/>
            <person name="Scanlan D."/>
            <person name="Kang K.H."/>
            <person name="Lewis M.R."/>
            <person name="Nelson K.E."/>
            <person name="Methe B.A."/>
            <person name="Wu M."/>
            <person name="Heidelberg J.F."/>
            <person name="Paulsen I.T."/>
            <person name="Fouts D.E."/>
            <person name="Ravel J."/>
            <person name="Tettelin H."/>
            <person name="Ren Q."/>
            <person name="Read T.D."/>
            <person name="DeBoy R.T."/>
            <person name="Seshadri R."/>
            <person name="Salzberg S.L."/>
            <person name="Jensen H.B."/>
            <person name="Birkeland N.K."/>
            <person name="Nelson W.C."/>
            <person name="Dodson R.J."/>
            <person name="Grindhaug S.H."/>
            <person name="Holt I.E."/>
            <person name="Eidhammer I."/>
            <person name="Jonasen I."/>
            <person name="Vanaken S."/>
            <person name="Utterback T.R."/>
            <person name="Feldblyum T.V."/>
            <person name="Fraser C.M."/>
            <person name="Lillehaug J.R."/>
            <person name="Eisen J.A."/>
        </authorList>
    </citation>
    <scope>NUCLEOTIDE SEQUENCE [LARGE SCALE GENOMIC DNA]</scope>
    <source>
        <strain>ATCC 33009 / NCIMB 11132 / Bath</strain>
    </source>
</reference>
<name>CYSD_METCA</name>
<feature type="chain" id="PRO_0000340205" description="Sulfate adenylyltransferase subunit 2">
    <location>
        <begin position="1"/>
        <end position="302"/>
    </location>
</feature>
<comment type="function">
    <text evidence="1">With CysN forms the ATP sulfurylase (ATPS) that catalyzes the adenylation of sulfate producing adenosine 5'-phosphosulfate (APS) and diphosphate, the first enzymatic step in sulfur assimilation pathway. APS synthesis involves the formation of a high-energy phosphoric-sulfuric acid anhydride bond driven by GTP hydrolysis by CysN coupled to ATP hydrolysis by CysD.</text>
</comment>
<comment type="catalytic activity">
    <reaction evidence="1">
        <text>sulfate + ATP + H(+) = adenosine 5'-phosphosulfate + diphosphate</text>
        <dbReference type="Rhea" id="RHEA:18133"/>
        <dbReference type="ChEBI" id="CHEBI:15378"/>
        <dbReference type="ChEBI" id="CHEBI:16189"/>
        <dbReference type="ChEBI" id="CHEBI:30616"/>
        <dbReference type="ChEBI" id="CHEBI:33019"/>
        <dbReference type="ChEBI" id="CHEBI:58243"/>
        <dbReference type="EC" id="2.7.7.4"/>
    </reaction>
</comment>
<comment type="pathway">
    <text evidence="1">Sulfur metabolism; hydrogen sulfide biosynthesis; sulfite from sulfate: step 1/3.</text>
</comment>
<comment type="subunit">
    <text evidence="1">Heterodimer composed of CysD, the smaller subunit, and CysN.</text>
</comment>
<comment type="similarity">
    <text evidence="1">Belongs to the PAPS reductase family. CysD subfamily.</text>
</comment>